<gene>
    <name type="primary">DNASE1</name>
    <name type="synonym">DNL1</name>
</gene>
<accession>P11937</accession>
<dbReference type="EC" id="3.1.21.1" evidence="3"/>
<dbReference type="PIR" id="B26325">
    <property type="entry name" value="B26325"/>
</dbReference>
<dbReference type="SMR" id="P11937"/>
<dbReference type="STRING" id="9940.ENSOARP00000002296"/>
<dbReference type="GlyCosmos" id="P11937">
    <property type="glycosylation" value="1 site, No reported glycans"/>
</dbReference>
<dbReference type="iPTMnet" id="P11937"/>
<dbReference type="PaxDb" id="9940-ENSOARP00000002296"/>
<dbReference type="eggNOG" id="ENOG502QQFT">
    <property type="taxonomic scope" value="Eukaryota"/>
</dbReference>
<dbReference type="Proteomes" id="UP000002356">
    <property type="component" value="Unplaced"/>
</dbReference>
<dbReference type="GO" id="GO:0005576">
    <property type="term" value="C:extracellular region"/>
    <property type="evidence" value="ECO:0007669"/>
    <property type="project" value="UniProtKB-SubCell"/>
</dbReference>
<dbReference type="GO" id="GO:0005635">
    <property type="term" value="C:nuclear envelope"/>
    <property type="evidence" value="ECO:0007669"/>
    <property type="project" value="UniProtKB-SubCell"/>
</dbReference>
<dbReference type="GO" id="GO:0042588">
    <property type="term" value="C:zymogen granule"/>
    <property type="evidence" value="ECO:0007669"/>
    <property type="project" value="UniProtKB-SubCell"/>
</dbReference>
<dbReference type="GO" id="GO:0003779">
    <property type="term" value="F:actin binding"/>
    <property type="evidence" value="ECO:0007669"/>
    <property type="project" value="UniProtKB-KW"/>
</dbReference>
<dbReference type="GO" id="GO:0004530">
    <property type="term" value="F:deoxyribonuclease I activity"/>
    <property type="evidence" value="ECO:0007669"/>
    <property type="project" value="UniProtKB-EC"/>
</dbReference>
<dbReference type="GO" id="GO:0003677">
    <property type="term" value="F:DNA binding"/>
    <property type="evidence" value="ECO:0007669"/>
    <property type="project" value="TreeGrafter"/>
</dbReference>
<dbReference type="GO" id="GO:0006915">
    <property type="term" value="P:apoptotic process"/>
    <property type="evidence" value="ECO:0007669"/>
    <property type="project" value="UniProtKB-KW"/>
</dbReference>
<dbReference type="GO" id="GO:0006308">
    <property type="term" value="P:DNA catabolic process"/>
    <property type="evidence" value="ECO:0000250"/>
    <property type="project" value="UniProtKB"/>
</dbReference>
<dbReference type="GO" id="GO:0002283">
    <property type="term" value="P:neutrophil activation involved in immune response"/>
    <property type="evidence" value="ECO:0000250"/>
    <property type="project" value="UniProtKB"/>
</dbReference>
<dbReference type="GO" id="GO:0002673">
    <property type="term" value="P:regulation of acute inflammatory response"/>
    <property type="evidence" value="ECO:0000250"/>
    <property type="project" value="UniProtKB"/>
</dbReference>
<dbReference type="GO" id="GO:0070948">
    <property type="term" value="P:regulation of neutrophil mediated cytotoxicity"/>
    <property type="evidence" value="ECO:0000250"/>
    <property type="project" value="UniProtKB"/>
</dbReference>
<dbReference type="CDD" id="cd10282">
    <property type="entry name" value="DNase1"/>
    <property type="match status" value="1"/>
</dbReference>
<dbReference type="FunFam" id="3.60.10.10:FF:000035">
    <property type="entry name" value="Deoxyribonuclease"/>
    <property type="match status" value="1"/>
</dbReference>
<dbReference type="Gene3D" id="3.60.10.10">
    <property type="entry name" value="Endonuclease/exonuclease/phosphatase"/>
    <property type="match status" value="1"/>
</dbReference>
<dbReference type="InterPro" id="IPR018057">
    <property type="entry name" value="Deoxyribonuclease-1_AS"/>
</dbReference>
<dbReference type="InterPro" id="IPR016202">
    <property type="entry name" value="DNase_I"/>
</dbReference>
<dbReference type="InterPro" id="IPR033125">
    <property type="entry name" value="DNASE_I_2"/>
</dbReference>
<dbReference type="InterPro" id="IPR036691">
    <property type="entry name" value="Endo/exonu/phosph_ase_sf"/>
</dbReference>
<dbReference type="InterPro" id="IPR005135">
    <property type="entry name" value="Endo/exonuclease/phosphatase"/>
</dbReference>
<dbReference type="PANTHER" id="PTHR11371">
    <property type="entry name" value="DEOXYRIBONUCLEASE"/>
    <property type="match status" value="1"/>
</dbReference>
<dbReference type="PANTHER" id="PTHR11371:SF27">
    <property type="entry name" value="DEOXYRIBONUCLEASE-1"/>
    <property type="match status" value="1"/>
</dbReference>
<dbReference type="Pfam" id="PF03372">
    <property type="entry name" value="Exo_endo_phos"/>
    <property type="match status" value="1"/>
</dbReference>
<dbReference type="PIRSF" id="PIRSF000988">
    <property type="entry name" value="DNase_I_euk"/>
    <property type="match status" value="1"/>
</dbReference>
<dbReference type="PRINTS" id="PR00130">
    <property type="entry name" value="DNASEI"/>
</dbReference>
<dbReference type="SMART" id="SM00476">
    <property type="entry name" value="DNaseIc"/>
    <property type="match status" value="1"/>
</dbReference>
<dbReference type="SUPFAM" id="SSF56219">
    <property type="entry name" value="DNase I-like"/>
    <property type="match status" value="1"/>
</dbReference>
<dbReference type="PROSITE" id="PS00919">
    <property type="entry name" value="DNASE_I_1"/>
    <property type="match status" value="1"/>
</dbReference>
<dbReference type="PROSITE" id="PS00918">
    <property type="entry name" value="DNASE_I_2"/>
    <property type="match status" value="1"/>
</dbReference>
<keyword id="KW-0009">Actin-binding</keyword>
<keyword id="KW-0053">Apoptosis</keyword>
<keyword id="KW-0106">Calcium</keyword>
<keyword id="KW-0968">Cytoplasmic vesicle</keyword>
<keyword id="KW-0903">Direct protein sequencing</keyword>
<keyword id="KW-1015">Disulfide bond</keyword>
<keyword id="KW-0255">Endonuclease</keyword>
<keyword id="KW-0325">Glycoprotein</keyword>
<keyword id="KW-0378">Hydrolase</keyword>
<keyword id="KW-0540">Nuclease</keyword>
<keyword id="KW-0539">Nucleus</keyword>
<keyword id="KW-1185">Reference proteome</keyword>
<keyword id="KW-0964">Secreted</keyword>
<sequence>LKIAAFNIRTFGETKMSNATLSSYIVRILRRYDIALIEQVRDSHLVAVGKLLDDLNQDDPNSYHYVVSEPLGRNSYKERYLFVFRPNKVSVLDTYQYDDGCESCGNDSFSREPAVVKFSSPSTKVKAFAIVPLHSAPSDAVAEINSLYDVYLDVQQKWDLNDIMLMGDFNADCSYVTSSQWSSIRLRTSSTFQWLIPDSADTTATSTNCAYDRIVVAGSLLQSSVVGPSAVPFDFQAAYGLSNEMALAISDHYPVEVTLT</sequence>
<protein>
    <recommendedName>
        <fullName>Deoxyribonuclease-1</fullName>
        <ecNumber evidence="3">3.1.21.1</ecNumber>
    </recommendedName>
    <alternativeName>
        <fullName>Deoxyribonuclease I</fullName>
        <shortName>DNase I</shortName>
    </alternativeName>
</protein>
<feature type="chain" id="PRO_0000145099" description="Deoxyribonuclease-1">
    <location>
        <begin position="1"/>
        <end position="260"/>
    </location>
</feature>
<feature type="active site" evidence="1">
    <location>
        <position position="78"/>
    </location>
</feature>
<feature type="active site" evidence="1">
    <location>
        <position position="134"/>
    </location>
</feature>
<feature type="site" description="Involved in actin-binding" evidence="1">
    <location>
        <position position="13"/>
    </location>
</feature>
<feature type="site" description="Nitration by tetranitromethane destroys a Ca(2+) binding site and inactivates enzyme" evidence="1">
    <location>
        <position position="65"/>
    </location>
</feature>
<feature type="site" description="Involved in actin-binding" evidence="1">
    <location>
        <position position="67"/>
    </location>
</feature>
<feature type="glycosylation site" description="N-linked (GlcNAc...) asparagine" evidence="5">
    <location>
        <position position="18"/>
    </location>
</feature>
<feature type="disulfide bond" evidence="1">
    <location>
        <begin position="101"/>
        <end position="104"/>
    </location>
</feature>
<feature type="disulfide bond" description="Essential for enzymatic activity" evidence="1">
    <location>
        <begin position="173"/>
        <end position="209"/>
    </location>
</feature>
<feature type="sequence variant" description="In minor variant.">
    <original>I</original>
    <variation>V</variation>
    <location>
        <position position="163"/>
    </location>
</feature>
<name>DNAS1_SHEEP</name>
<organism>
    <name type="scientific">Ovis aries</name>
    <name type="common">Sheep</name>
    <dbReference type="NCBI Taxonomy" id="9940"/>
    <lineage>
        <taxon>Eukaryota</taxon>
        <taxon>Metazoa</taxon>
        <taxon>Chordata</taxon>
        <taxon>Craniata</taxon>
        <taxon>Vertebrata</taxon>
        <taxon>Euteleostomi</taxon>
        <taxon>Mammalia</taxon>
        <taxon>Eutheria</taxon>
        <taxon>Laurasiatheria</taxon>
        <taxon>Artiodactyla</taxon>
        <taxon>Ruminantia</taxon>
        <taxon>Pecora</taxon>
        <taxon>Bovidae</taxon>
        <taxon>Caprinae</taxon>
        <taxon>Ovis</taxon>
    </lineage>
</organism>
<comment type="function">
    <text evidence="1 2 3 4">Serum endocuclease secreted into body fluids by a wide variety of exocrine and endocrine organs (By similarity). Expressed by non-hematopoietic tissues and preferentially cleaves protein-free DNA. Among other functions, seems to be involved in cell death by apoptosis. Binds specifically to G-actin and blocks actin polymerization (By similarity). Together with DNASE1L3, plays a key role in degrading neutrophil extracellular traps (NETs). NETs are mainly composed of DNA fibers and are released by neutrophils to bind pathogens during inflammation. Degradation of intravascular NETs by DNASE1 and DNASE1L3 is required to prevent formation of clots that obstruct blood vessels and cause organ damage following inflammation (By similarity).</text>
</comment>
<comment type="catalytic activity">
    <reaction evidence="3">
        <text>Endonucleolytic cleavage to 5'-phosphodinucleotide and 5'-phosphooligonucleotide end-products.</text>
        <dbReference type="EC" id="3.1.21.1"/>
    </reaction>
</comment>
<comment type="cofactor">
    <cofactor evidence="3">
        <name>Ca(2+)</name>
        <dbReference type="ChEBI" id="CHEBI:29108"/>
    </cofactor>
    <cofactor evidence="3">
        <name>Mg(2+)</name>
        <dbReference type="ChEBI" id="CHEBI:18420"/>
    </cofactor>
    <text evidence="3">Divalent metal cations. Prefers Ca(2+) or Mg(2+).</text>
</comment>
<comment type="subcellular location">
    <subcellularLocation>
        <location evidence="3">Secreted</location>
    </subcellularLocation>
    <subcellularLocation>
        <location evidence="3">Zymogen granule</location>
    </subcellularLocation>
    <subcellularLocation>
        <location evidence="3">Nucleus envelope</location>
    </subcellularLocation>
    <text evidence="3">Secretory protein, stored in zymogen granules and found in the nuclear envelope.</text>
</comment>
<comment type="similarity">
    <text evidence="6">Belongs to the DNase I family.</text>
</comment>
<reference key="1">
    <citation type="journal article" date="1986" name="J. Biol. Chem.">
        <title>Comparison of the three primary structures of deoxyribonuclease isolated from bovine, ovine, and porcine pancreas. Derivation of the amino acid sequence of ovine DNase and revision of the previously published amino acid sequence of bovine DNase.</title>
        <authorList>
            <person name="Paudel H.K."/>
            <person name="Liao T.-H."/>
        </authorList>
    </citation>
    <scope>PROTEIN SEQUENCE</scope>
    <scope>GLYCOSYLATION AT ASN-18</scope>
    <source>
        <tissue>Pancreas</tissue>
    </source>
</reference>
<evidence type="ECO:0000250" key="1">
    <source>
        <dbReference type="UniProtKB" id="P00639"/>
    </source>
</evidence>
<evidence type="ECO:0000250" key="2">
    <source>
        <dbReference type="UniProtKB" id="P21704"/>
    </source>
</evidence>
<evidence type="ECO:0000250" key="3">
    <source>
        <dbReference type="UniProtKB" id="P24855"/>
    </source>
</evidence>
<evidence type="ECO:0000250" key="4">
    <source>
        <dbReference type="UniProtKB" id="P49183"/>
    </source>
</evidence>
<evidence type="ECO:0000269" key="5">
    <source>
    </source>
</evidence>
<evidence type="ECO:0000305" key="6"/>
<proteinExistence type="evidence at protein level"/>